<proteinExistence type="evidence at transcript level"/>
<accession>P11480</accession>
<keyword id="KW-0007">Acetylation</keyword>
<keyword id="KW-0963">Cytoplasm</keyword>
<keyword id="KW-0206">Cytoskeleton</keyword>
<keyword id="KW-0342">GTP-binding</keyword>
<keyword id="KW-0378">Hydrolase</keyword>
<keyword id="KW-0460">Magnesium</keyword>
<keyword id="KW-0479">Metal-binding</keyword>
<keyword id="KW-0493">Microtubule</keyword>
<keyword id="KW-0547">Nucleotide-binding</keyword>
<keyword id="KW-0539">Nucleus</keyword>
<reference key="1">
    <citation type="journal article" date="1989" name="Eur. J. Biochem.">
        <title>Structure and expression of an alpha-tubulin gene of Physarum polycephalum.</title>
        <authorList>
            <person name="Walden P.D."/>
            <person name="Monteiro M.J."/>
            <person name="Gull K."/>
            <person name="Cox R.A."/>
        </authorList>
    </citation>
    <scope>NUCLEOTIDE SEQUENCE [GENOMIC DNA]</scope>
    <source>
        <strain>M3CVIII</strain>
    </source>
</reference>
<feature type="chain" id="PRO_0000048214" description="Tubulin alpha-2B chain">
    <location>
        <begin position="1"/>
        <end position="449"/>
    </location>
</feature>
<feature type="active site" evidence="2">
    <location>
        <position position="254"/>
    </location>
</feature>
<feature type="binding site" evidence="2">
    <location>
        <position position="11"/>
    </location>
    <ligand>
        <name>GTP</name>
        <dbReference type="ChEBI" id="CHEBI:37565"/>
    </ligand>
</feature>
<feature type="binding site" evidence="2">
    <location>
        <position position="71"/>
    </location>
    <ligand>
        <name>GTP</name>
        <dbReference type="ChEBI" id="CHEBI:37565"/>
    </ligand>
</feature>
<feature type="binding site" evidence="2">
    <location>
        <position position="71"/>
    </location>
    <ligand>
        <name>Mg(2+)</name>
        <dbReference type="ChEBI" id="CHEBI:18420"/>
    </ligand>
</feature>
<feature type="binding site" evidence="2">
    <location>
        <position position="140"/>
    </location>
    <ligand>
        <name>GTP</name>
        <dbReference type="ChEBI" id="CHEBI:37565"/>
    </ligand>
</feature>
<feature type="binding site" evidence="2">
    <location>
        <position position="144"/>
    </location>
    <ligand>
        <name>GTP</name>
        <dbReference type="ChEBI" id="CHEBI:37565"/>
    </ligand>
</feature>
<feature type="binding site" evidence="2">
    <location>
        <position position="145"/>
    </location>
    <ligand>
        <name>GTP</name>
        <dbReference type="ChEBI" id="CHEBI:37565"/>
    </ligand>
</feature>
<feature type="binding site" evidence="2">
    <location>
        <position position="179"/>
    </location>
    <ligand>
        <name>GTP</name>
        <dbReference type="ChEBI" id="CHEBI:37565"/>
    </ligand>
</feature>
<feature type="binding site" evidence="2">
    <location>
        <position position="206"/>
    </location>
    <ligand>
        <name>GTP</name>
        <dbReference type="ChEBI" id="CHEBI:37565"/>
    </ligand>
</feature>
<feature type="binding site" evidence="2">
    <location>
        <position position="228"/>
    </location>
    <ligand>
        <name>GTP</name>
        <dbReference type="ChEBI" id="CHEBI:37565"/>
    </ligand>
</feature>
<feature type="modified residue" description="N6-acetyllysine" evidence="1">
    <location>
        <position position="40"/>
    </location>
</feature>
<name>TBAE_PHYPO</name>
<dbReference type="EC" id="3.6.5.-" evidence="2"/>
<dbReference type="EMBL" id="X14213">
    <property type="protein sequence ID" value="CAA32430.1"/>
    <property type="molecule type" value="Genomic_DNA"/>
</dbReference>
<dbReference type="PIR" id="S04474">
    <property type="entry name" value="S04474"/>
</dbReference>
<dbReference type="SMR" id="P11480"/>
<dbReference type="GO" id="GO:0005737">
    <property type="term" value="C:cytoplasm"/>
    <property type="evidence" value="ECO:0007669"/>
    <property type="project" value="UniProtKB-KW"/>
</dbReference>
<dbReference type="GO" id="GO:0005874">
    <property type="term" value="C:microtubule"/>
    <property type="evidence" value="ECO:0007669"/>
    <property type="project" value="UniProtKB-KW"/>
</dbReference>
<dbReference type="GO" id="GO:0005634">
    <property type="term" value="C:nucleus"/>
    <property type="evidence" value="ECO:0007669"/>
    <property type="project" value="UniProtKB-SubCell"/>
</dbReference>
<dbReference type="GO" id="GO:0005819">
    <property type="term" value="C:spindle"/>
    <property type="evidence" value="ECO:0007669"/>
    <property type="project" value="UniProtKB-SubCell"/>
</dbReference>
<dbReference type="GO" id="GO:0005525">
    <property type="term" value="F:GTP binding"/>
    <property type="evidence" value="ECO:0007669"/>
    <property type="project" value="UniProtKB-KW"/>
</dbReference>
<dbReference type="GO" id="GO:0016787">
    <property type="term" value="F:hydrolase activity"/>
    <property type="evidence" value="ECO:0007669"/>
    <property type="project" value="UniProtKB-KW"/>
</dbReference>
<dbReference type="GO" id="GO:0046872">
    <property type="term" value="F:metal ion binding"/>
    <property type="evidence" value="ECO:0007669"/>
    <property type="project" value="UniProtKB-KW"/>
</dbReference>
<dbReference type="GO" id="GO:0005200">
    <property type="term" value="F:structural constituent of cytoskeleton"/>
    <property type="evidence" value="ECO:0007669"/>
    <property type="project" value="InterPro"/>
</dbReference>
<dbReference type="GO" id="GO:0007017">
    <property type="term" value="P:microtubule-based process"/>
    <property type="evidence" value="ECO:0007669"/>
    <property type="project" value="InterPro"/>
</dbReference>
<dbReference type="CDD" id="cd02186">
    <property type="entry name" value="alpha_tubulin"/>
    <property type="match status" value="1"/>
</dbReference>
<dbReference type="FunFam" id="1.10.287.600:FF:000005">
    <property type="entry name" value="Tubulin alpha chain"/>
    <property type="match status" value="1"/>
</dbReference>
<dbReference type="FunFam" id="3.30.1330.20:FF:000001">
    <property type="entry name" value="Tubulin alpha chain"/>
    <property type="match status" value="1"/>
</dbReference>
<dbReference type="FunFam" id="3.40.50.1440:FF:000004">
    <property type="entry name" value="Tubulin alpha chain"/>
    <property type="match status" value="1"/>
</dbReference>
<dbReference type="Gene3D" id="1.10.287.600">
    <property type="entry name" value="Helix hairpin bin"/>
    <property type="match status" value="1"/>
</dbReference>
<dbReference type="Gene3D" id="3.30.1330.20">
    <property type="entry name" value="Tubulin/FtsZ, C-terminal domain"/>
    <property type="match status" value="1"/>
</dbReference>
<dbReference type="Gene3D" id="3.40.50.1440">
    <property type="entry name" value="Tubulin/FtsZ, GTPase domain"/>
    <property type="match status" value="1"/>
</dbReference>
<dbReference type="InterPro" id="IPR002452">
    <property type="entry name" value="Alpha_tubulin"/>
</dbReference>
<dbReference type="InterPro" id="IPR013838">
    <property type="entry name" value="Beta-tubulin_BS"/>
</dbReference>
<dbReference type="InterPro" id="IPR008280">
    <property type="entry name" value="Tub_FtsZ_C"/>
</dbReference>
<dbReference type="InterPro" id="IPR000217">
    <property type="entry name" value="Tubulin"/>
</dbReference>
<dbReference type="InterPro" id="IPR037103">
    <property type="entry name" value="Tubulin/FtsZ-like_C"/>
</dbReference>
<dbReference type="InterPro" id="IPR018316">
    <property type="entry name" value="Tubulin/FtsZ_2-layer-sand-dom"/>
</dbReference>
<dbReference type="InterPro" id="IPR036525">
    <property type="entry name" value="Tubulin/FtsZ_GTPase_sf"/>
</dbReference>
<dbReference type="InterPro" id="IPR023123">
    <property type="entry name" value="Tubulin_C"/>
</dbReference>
<dbReference type="InterPro" id="IPR017975">
    <property type="entry name" value="Tubulin_CS"/>
</dbReference>
<dbReference type="InterPro" id="IPR003008">
    <property type="entry name" value="Tubulin_FtsZ_GTPase"/>
</dbReference>
<dbReference type="PANTHER" id="PTHR11588">
    <property type="entry name" value="TUBULIN"/>
    <property type="match status" value="1"/>
</dbReference>
<dbReference type="Pfam" id="PF00091">
    <property type="entry name" value="Tubulin"/>
    <property type="match status" value="1"/>
</dbReference>
<dbReference type="Pfam" id="PF03953">
    <property type="entry name" value="Tubulin_C"/>
    <property type="match status" value="1"/>
</dbReference>
<dbReference type="PRINTS" id="PR01162">
    <property type="entry name" value="ALPHATUBULIN"/>
</dbReference>
<dbReference type="PRINTS" id="PR01161">
    <property type="entry name" value="TUBULIN"/>
</dbReference>
<dbReference type="SMART" id="SM00864">
    <property type="entry name" value="Tubulin"/>
    <property type="match status" value="1"/>
</dbReference>
<dbReference type="SMART" id="SM00865">
    <property type="entry name" value="Tubulin_C"/>
    <property type="match status" value="1"/>
</dbReference>
<dbReference type="SUPFAM" id="SSF55307">
    <property type="entry name" value="Tubulin C-terminal domain-like"/>
    <property type="match status" value="1"/>
</dbReference>
<dbReference type="SUPFAM" id="SSF52490">
    <property type="entry name" value="Tubulin nucleotide-binding domain-like"/>
    <property type="match status" value="1"/>
</dbReference>
<dbReference type="PROSITE" id="PS00227">
    <property type="entry name" value="TUBULIN"/>
    <property type="match status" value="1"/>
</dbReference>
<organism>
    <name type="scientific">Physarum polycephalum</name>
    <name type="common">Slime mold</name>
    <dbReference type="NCBI Taxonomy" id="5791"/>
    <lineage>
        <taxon>Eukaryota</taxon>
        <taxon>Amoebozoa</taxon>
        <taxon>Evosea</taxon>
        <taxon>Eumycetozoa</taxon>
        <taxon>Myxogastria</taxon>
        <taxon>Myxogastromycetidae</taxon>
        <taxon>Physariida</taxon>
        <taxon>Physaraceae</taxon>
        <taxon>Physarum</taxon>
    </lineage>
</organism>
<protein>
    <recommendedName>
        <fullName>Tubulin alpha-2B chain</fullName>
        <ecNumber evidence="2">3.6.5.-</ecNumber>
    </recommendedName>
    <alternativeName>
        <fullName>Tubulin alpha-E chain</fullName>
    </alternativeName>
</protein>
<comment type="function">
    <text>Tubulin is the major constituent of microtubules, a cylinder consisting of laterally associated linear protofilaments composed of alpha- and beta-tubulin heterodimers. Microtubules grow by the addition of GTP-tubulin dimers to the microtubule end, where a stabilizing cap forms. Below the cap, tubulin dimers are in GDP-bound state, owing to GTPase activity of alpha-tubulin.</text>
</comment>
<comment type="catalytic activity">
    <reaction evidence="2">
        <text>GTP + H2O = GDP + phosphate + H(+)</text>
        <dbReference type="Rhea" id="RHEA:19669"/>
        <dbReference type="ChEBI" id="CHEBI:15377"/>
        <dbReference type="ChEBI" id="CHEBI:15378"/>
        <dbReference type="ChEBI" id="CHEBI:37565"/>
        <dbReference type="ChEBI" id="CHEBI:43474"/>
        <dbReference type="ChEBI" id="CHEBI:58189"/>
    </reaction>
    <physiologicalReaction direction="left-to-right" evidence="2">
        <dbReference type="Rhea" id="RHEA:19670"/>
    </physiologicalReaction>
</comment>
<comment type="cofactor">
    <cofactor evidence="2">
        <name>Mg(2+)</name>
        <dbReference type="ChEBI" id="CHEBI:18420"/>
    </cofactor>
</comment>
<comment type="subunit">
    <text>Dimer of alpha and beta chains. A typical microtubule is a hollow water-filled tube with an outer diameter of 25 nm and an inner diameter of 15 nM. Alpha-beta heterodimers associate head-to-tail to form protofilaments running lengthwise along the microtubule wall with the beta-tubulin subunit facing the microtubule plus end conferring a structural polarity. Microtubules usually have 13 protofilaments but different protofilament numbers can be found in some organisms and specialized cells.</text>
</comment>
<comment type="subcellular location">
    <subcellularLocation>
        <location>Cytoplasm</location>
        <location>Cytoskeleton</location>
        <location>Spindle</location>
    </subcellularLocation>
    <subcellularLocation>
        <location>Nucleus</location>
    </subcellularLocation>
    <text>Mitosis in the slime mold Plasmodium differs from the process in many eukaryotes. The tubulin chains must be transported to the nuclei for intranuclear assembly of the spindle.</text>
</comment>
<comment type="developmental stage">
    <text>Plasmodium specific alpha 2-tubulin.</text>
</comment>
<comment type="PTM">
    <text evidence="1">Acetylation of alpha chains at Lys-40 stabilizes microtubules and affects affinity and processivity of microtubule motors. This modification has a role in multiple cellular functions, ranging from cell motility, cell cycle progression or cell differentiation to intracellular trafficking and signaling (By similarity).</text>
</comment>
<comment type="similarity">
    <text evidence="3">Belongs to the tubulin family.</text>
</comment>
<evidence type="ECO:0000250" key="1"/>
<evidence type="ECO:0000250" key="2">
    <source>
        <dbReference type="UniProtKB" id="P68363"/>
    </source>
</evidence>
<evidence type="ECO:0000305" key="3"/>
<sequence>MREILSIHIGQAGAQVGNACWELYCLEHGIKPDGQMPSDKSVGGGDDAFNTFFSETSSGKHVPRAIFLDLEPTVIDEIRTGTYRQLFHPEQLITGKEDAANNYARGHYTVGKELVDLCLDRVRKLADQCSGLQGFLVFHSVGGGTGSGFGSLLLERLSVDYGKKSKLDFCVYPSPQVSTAVVEPYNSVLSTHGLLEHTDVAFMLDNEAIYDLCKRSLDIERPSYANLNRLVAQVISSLTTSLRFDGALNVDITEFQTNLVPYPRIHFMLASYAPVISAEKAFHEQLSVAELTNTVFDPSSMMAKCDPRHGKYMACCLMYRGDVVPKDVNAAVAVIKTKRTIQFVDWCPTGFKCGINYQPPSVVPGGDLAKVQRALCMISNTTAIAEVFSRIDHKFDLMYAKRAFVHWYVGEGMEEVEFSEAREDLAALEKDYEEVGAETAEDDGADEEM</sequence>
<gene>
    <name type="primary">ALTBE</name>
    <name type="synonym">ALTB2</name>
</gene>